<comment type="catalytic activity">
    <reaction evidence="1">
        <text>CMP + ATP = CDP + ADP</text>
        <dbReference type="Rhea" id="RHEA:11600"/>
        <dbReference type="ChEBI" id="CHEBI:30616"/>
        <dbReference type="ChEBI" id="CHEBI:58069"/>
        <dbReference type="ChEBI" id="CHEBI:60377"/>
        <dbReference type="ChEBI" id="CHEBI:456216"/>
        <dbReference type="EC" id="2.7.4.25"/>
    </reaction>
</comment>
<comment type="catalytic activity">
    <reaction evidence="1">
        <text>dCMP + ATP = dCDP + ADP</text>
        <dbReference type="Rhea" id="RHEA:25094"/>
        <dbReference type="ChEBI" id="CHEBI:30616"/>
        <dbReference type="ChEBI" id="CHEBI:57566"/>
        <dbReference type="ChEBI" id="CHEBI:58593"/>
        <dbReference type="ChEBI" id="CHEBI:456216"/>
        <dbReference type="EC" id="2.7.4.25"/>
    </reaction>
</comment>
<comment type="subcellular location">
    <subcellularLocation>
        <location evidence="1">Cytoplasm</location>
    </subcellularLocation>
</comment>
<comment type="similarity">
    <text evidence="1">Belongs to the cytidylate kinase family. Type 1 subfamily.</text>
</comment>
<feature type="chain" id="PRO_1000125300" description="Cytidylate kinase">
    <location>
        <begin position="1"/>
        <end position="226"/>
    </location>
</feature>
<feature type="binding site" evidence="1">
    <location>
        <begin position="10"/>
        <end position="18"/>
    </location>
    <ligand>
        <name>ATP</name>
        <dbReference type="ChEBI" id="CHEBI:30616"/>
    </ligand>
</feature>
<reference key="1">
    <citation type="journal article" date="2009" name="PLoS Pathog.">
        <title>Genomic evidence for the evolution of Streptococcus equi: host restriction, increased virulence, and genetic exchange with human pathogens.</title>
        <authorList>
            <person name="Holden M.T.G."/>
            <person name="Heather Z."/>
            <person name="Paillot R."/>
            <person name="Steward K.F."/>
            <person name="Webb K."/>
            <person name="Ainslie F."/>
            <person name="Jourdan T."/>
            <person name="Bason N.C."/>
            <person name="Holroyd N.E."/>
            <person name="Mungall K."/>
            <person name="Quail M.A."/>
            <person name="Sanders M."/>
            <person name="Simmonds M."/>
            <person name="Willey D."/>
            <person name="Brooks K."/>
            <person name="Aanensen D.M."/>
            <person name="Spratt B.G."/>
            <person name="Jolley K.A."/>
            <person name="Maiden M.C.J."/>
            <person name="Kehoe M."/>
            <person name="Chanter N."/>
            <person name="Bentley S.D."/>
            <person name="Robinson C."/>
            <person name="Maskell D.J."/>
            <person name="Parkhill J."/>
            <person name="Waller A.S."/>
        </authorList>
    </citation>
    <scope>NUCLEOTIDE SEQUENCE [LARGE SCALE GENOMIC DNA]</scope>
    <source>
        <strain>4047</strain>
    </source>
</reference>
<accession>C0M8S8</accession>
<organism>
    <name type="scientific">Streptococcus equi subsp. equi (strain 4047)</name>
    <dbReference type="NCBI Taxonomy" id="553482"/>
    <lineage>
        <taxon>Bacteria</taxon>
        <taxon>Bacillati</taxon>
        <taxon>Bacillota</taxon>
        <taxon>Bacilli</taxon>
        <taxon>Lactobacillales</taxon>
        <taxon>Streptococcaceae</taxon>
        <taxon>Streptococcus</taxon>
    </lineage>
</organism>
<protein>
    <recommendedName>
        <fullName evidence="1">Cytidylate kinase</fullName>
        <shortName evidence="1">CK</shortName>
        <ecNumber evidence="1">2.7.4.25</ecNumber>
    </recommendedName>
    <alternativeName>
        <fullName evidence="1">Cytidine monophosphate kinase</fullName>
        <shortName evidence="1">CMP kinase</shortName>
    </alternativeName>
</protein>
<name>KCY_STRE4</name>
<sequence>MKAIRIAIDGPASSGKSTVAKIIAKNLGYTYLDTGAMYRSATYIALKNGYHKEDVNLILQELAKRPISFKKAADGSQLVFLGDQDVTMAIRQNDVTNNVSWVSALPEIREELVNQQRRIARTGAIIMDGRDIGTVVLPDAELKIFLIASVEERAQRRYQENIEKGIAADFDTLKAEIAARDYKDSHRQVSPLKAADDAIIFDTTGITISAVVQFIQEKAEKIIDMA</sequence>
<proteinExistence type="inferred from homology"/>
<dbReference type="EC" id="2.7.4.25" evidence="1"/>
<dbReference type="EMBL" id="FM204883">
    <property type="protein sequence ID" value="CAW93542.1"/>
    <property type="molecule type" value="Genomic_DNA"/>
</dbReference>
<dbReference type="RefSeq" id="WP_012679437.1">
    <property type="nucleotide sequence ID" value="NC_012471.1"/>
</dbReference>
<dbReference type="SMR" id="C0M8S8"/>
<dbReference type="KEGG" id="seu:SEQ_0980"/>
<dbReference type="HOGENOM" id="CLU_079959_0_2_9"/>
<dbReference type="OrthoDB" id="9807434at2"/>
<dbReference type="Proteomes" id="UP000001365">
    <property type="component" value="Chromosome"/>
</dbReference>
<dbReference type="GO" id="GO:0005829">
    <property type="term" value="C:cytosol"/>
    <property type="evidence" value="ECO:0007669"/>
    <property type="project" value="TreeGrafter"/>
</dbReference>
<dbReference type="GO" id="GO:0005524">
    <property type="term" value="F:ATP binding"/>
    <property type="evidence" value="ECO:0007669"/>
    <property type="project" value="UniProtKB-UniRule"/>
</dbReference>
<dbReference type="GO" id="GO:0036430">
    <property type="term" value="F:CMP kinase activity"/>
    <property type="evidence" value="ECO:0007669"/>
    <property type="project" value="RHEA"/>
</dbReference>
<dbReference type="GO" id="GO:0036431">
    <property type="term" value="F:dCMP kinase activity"/>
    <property type="evidence" value="ECO:0007669"/>
    <property type="project" value="RHEA"/>
</dbReference>
<dbReference type="GO" id="GO:0015949">
    <property type="term" value="P:nucleobase-containing small molecule interconversion"/>
    <property type="evidence" value="ECO:0007669"/>
    <property type="project" value="TreeGrafter"/>
</dbReference>
<dbReference type="GO" id="GO:0006220">
    <property type="term" value="P:pyrimidine nucleotide metabolic process"/>
    <property type="evidence" value="ECO:0007669"/>
    <property type="project" value="UniProtKB-UniRule"/>
</dbReference>
<dbReference type="CDD" id="cd02020">
    <property type="entry name" value="CMPK"/>
    <property type="match status" value="1"/>
</dbReference>
<dbReference type="FunFam" id="3.40.50.300:FF:000484">
    <property type="entry name" value="Cytidylate kinase"/>
    <property type="match status" value="1"/>
</dbReference>
<dbReference type="Gene3D" id="3.40.50.300">
    <property type="entry name" value="P-loop containing nucleotide triphosphate hydrolases"/>
    <property type="match status" value="1"/>
</dbReference>
<dbReference type="HAMAP" id="MF_00238">
    <property type="entry name" value="Cytidyl_kinase_type1"/>
    <property type="match status" value="1"/>
</dbReference>
<dbReference type="InterPro" id="IPR003136">
    <property type="entry name" value="Cytidylate_kin"/>
</dbReference>
<dbReference type="InterPro" id="IPR011994">
    <property type="entry name" value="Cytidylate_kinase_dom"/>
</dbReference>
<dbReference type="InterPro" id="IPR027417">
    <property type="entry name" value="P-loop_NTPase"/>
</dbReference>
<dbReference type="NCBIfam" id="TIGR00017">
    <property type="entry name" value="cmk"/>
    <property type="match status" value="1"/>
</dbReference>
<dbReference type="PANTHER" id="PTHR21299:SF2">
    <property type="entry name" value="CYTIDYLATE KINASE"/>
    <property type="match status" value="1"/>
</dbReference>
<dbReference type="PANTHER" id="PTHR21299">
    <property type="entry name" value="CYTIDYLATE KINASE/PANTOATE-BETA-ALANINE LIGASE"/>
    <property type="match status" value="1"/>
</dbReference>
<dbReference type="Pfam" id="PF02224">
    <property type="entry name" value="Cytidylate_kin"/>
    <property type="match status" value="1"/>
</dbReference>
<dbReference type="SUPFAM" id="SSF52540">
    <property type="entry name" value="P-loop containing nucleoside triphosphate hydrolases"/>
    <property type="match status" value="1"/>
</dbReference>
<keyword id="KW-0067">ATP-binding</keyword>
<keyword id="KW-0963">Cytoplasm</keyword>
<keyword id="KW-0418">Kinase</keyword>
<keyword id="KW-0547">Nucleotide-binding</keyword>
<keyword id="KW-0808">Transferase</keyword>
<evidence type="ECO:0000255" key="1">
    <source>
        <dbReference type="HAMAP-Rule" id="MF_00238"/>
    </source>
</evidence>
<gene>
    <name evidence="1" type="primary">cmk</name>
    <name type="ordered locus">SEQ_0980</name>
</gene>